<gene>
    <name type="primary">CHAMP1</name>
    <name type="synonym">C13orf8</name>
    <name type="synonym">CAMP</name>
    <name type="synonym">CHAMP</name>
    <name type="synonym">KIAA1802</name>
    <name type="synonym">ZNF828</name>
</gene>
<keyword id="KW-0002">3D-structure</keyword>
<keyword id="KW-0007">Acetylation</keyword>
<keyword id="KW-0137">Centromere</keyword>
<keyword id="KW-0158">Chromosome</keyword>
<keyword id="KW-0963">Cytoplasm</keyword>
<keyword id="KW-0206">Cytoskeleton</keyword>
<keyword id="KW-0991">Intellectual disability</keyword>
<keyword id="KW-1017">Isopeptide bond</keyword>
<keyword id="KW-0995">Kinetochore</keyword>
<keyword id="KW-0479">Metal-binding</keyword>
<keyword id="KW-0539">Nucleus</keyword>
<keyword id="KW-0597">Phosphoprotein</keyword>
<keyword id="KW-1267">Proteomics identification</keyword>
<keyword id="KW-1185">Reference proteome</keyword>
<keyword id="KW-0832">Ubl conjugation</keyword>
<keyword id="KW-0862">Zinc</keyword>
<keyword id="KW-0863">Zinc-finger</keyword>
<organism>
    <name type="scientific">Homo sapiens</name>
    <name type="common">Human</name>
    <dbReference type="NCBI Taxonomy" id="9606"/>
    <lineage>
        <taxon>Eukaryota</taxon>
        <taxon>Metazoa</taxon>
        <taxon>Chordata</taxon>
        <taxon>Craniata</taxon>
        <taxon>Vertebrata</taxon>
        <taxon>Euteleostomi</taxon>
        <taxon>Mammalia</taxon>
        <taxon>Eutheria</taxon>
        <taxon>Euarchontoglires</taxon>
        <taxon>Primates</taxon>
        <taxon>Haplorrhini</taxon>
        <taxon>Catarrhini</taxon>
        <taxon>Hominidae</taxon>
        <taxon>Homo</taxon>
    </lineage>
</organism>
<evidence type="ECO:0000250" key="1">
    <source>
        <dbReference type="UniProtKB" id="Q8K327"/>
    </source>
</evidence>
<evidence type="ECO:0000255" key="2">
    <source>
        <dbReference type="PROSITE-ProRule" id="PRU00042"/>
    </source>
</evidence>
<evidence type="ECO:0000256" key="3">
    <source>
        <dbReference type="SAM" id="MobiDB-lite"/>
    </source>
</evidence>
<evidence type="ECO:0000269" key="4">
    <source>
    </source>
</evidence>
<evidence type="ECO:0000269" key="5">
    <source>
    </source>
</evidence>
<evidence type="ECO:0000305" key="6"/>
<evidence type="ECO:0007744" key="7">
    <source>
    </source>
</evidence>
<evidence type="ECO:0007744" key="8">
    <source>
    </source>
</evidence>
<evidence type="ECO:0007744" key="9">
    <source>
    </source>
</evidence>
<evidence type="ECO:0007744" key="10">
    <source>
    </source>
</evidence>
<evidence type="ECO:0007744" key="11">
    <source>
    </source>
</evidence>
<evidence type="ECO:0007744" key="12">
    <source>
    </source>
</evidence>
<evidence type="ECO:0007744" key="13">
    <source>
    </source>
</evidence>
<evidence type="ECO:0007744" key="14">
    <source>
    </source>
</evidence>
<evidence type="ECO:0007744" key="15">
    <source>
    </source>
</evidence>
<evidence type="ECO:0007744" key="16">
    <source>
    </source>
</evidence>
<evidence type="ECO:0007744" key="17">
    <source>
    </source>
</evidence>
<evidence type="ECO:0007744" key="18">
    <source>
    </source>
</evidence>
<evidence type="ECO:0007829" key="19">
    <source>
        <dbReference type="PDB" id="6EKJ"/>
    </source>
</evidence>
<reference key="1">
    <citation type="journal article" date="2001" name="DNA Res.">
        <title>Prediction of the coding sequences of unidentified human genes. XX. The complete sequences of 100 new cDNA clones from brain which code for large proteins in vitro.</title>
        <authorList>
            <person name="Nagase T."/>
            <person name="Nakayama M."/>
            <person name="Nakajima D."/>
            <person name="Kikuno R."/>
            <person name="Ohara O."/>
        </authorList>
    </citation>
    <scope>NUCLEOTIDE SEQUENCE [LARGE SCALE MRNA]</scope>
    <source>
        <tissue>Brain</tissue>
    </source>
</reference>
<reference key="2">
    <citation type="journal article" date="2004" name="Nat. Genet.">
        <title>Complete sequencing and characterization of 21,243 full-length human cDNAs.</title>
        <authorList>
            <person name="Ota T."/>
            <person name="Suzuki Y."/>
            <person name="Nishikawa T."/>
            <person name="Otsuki T."/>
            <person name="Sugiyama T."/>
            <person name="Irie R."/>
            <person name="Wakamatsu A."/>
            <person name="Hayashi K."/>
            <person name="Sato H."/>
            <person name="Nagai K."/>
            <person name="Kimura K."/>
            <person name="Makita H."/>
            <person name="Sekine M."/>
            <person name="Obayashi M."/>
            <person name="Nishi T."/>
            <person name="Shibahara T."/>
            <person name="Tanaka T."/>
            <person name="Ishii S."/>
            <person name="Yamamoto J."/>
            <person name="Saito K."/>
            <person name="Kawai Y."/>
            <person name="Isono Y."/>
            <person name="Nakamura Y."/>
            <person name="Nagahari K."/>
            <person name="Murakami K."/>
            <person name="Yasuda T."/>
            <person name="Iwayanagi T."/>
            <person name="Wagatsuma M."/>
            <person name="Shiratori A."/>
            <person name="Sudo H."/>
            <person name="Hosoiri T."/>
            <person name="Kaku Y."/>
            <person name="Kodaira H."/>
            <person name="Kondo H."/>
            <person name="Sugawara M."/>
            <person name="Takahashi M."/>
            <person name="Kanda K."/>
            <person name="Yokoi T."/>
            <person name="Furuya T."/>
            <person name="Kikkawa E."/>
            <person name="Omura Y."/>
            <person name="Abe K."/>
            <person name="Kamihara K."/>
            <person name="Katsuta N."/>
            <person name="Sato K."/>
            <person name="Tanikawa M."/>
            <person name="Yamazaki M."/>
            <person name="Ninomiya K."/>
            <person name="Ishibashi T."/>
            <person name="Yamashita H."/>
            <person name="Murakawa K."/>
            <person name="Fujimori K."/>
            <person name="Tanai H."/>
            <person name="Kimata M."/>
            <person name="Watanabe M."/>
            <person name="Hiraoka S."/>
            <person name="Chiba Y."/>
            <person name="Ishida S."/>
            <person name="Ono Y."/>
            <person name="Takiguchi S."/>
            <person name="Watanabe S."/>
            <person name="Yosida M."/>
            <person name="Hotuta T."/>
            <person name="Kusano J."/>
            <person name="Kanehori K."/>
            <person name="Takahashi-Fujii A."/>
            <person name="Hara H."/>
            <person name="Tanase T.-O."/>
            <person name="Nomura Y."/>
            <person name="Togiya S."/>
            <person name="Komai F."/>
            <person name="Hara R."/>
            <person name="Takeuchi K."/>
            <person name="Arita M."/>
            <person name="Imose N."/>
            <person name="Musashino K."/>
            <person name="Yuuki H."/>
            <person name="Oshima A."/>
            <person name="Sasaki N."/>
            <person name="Aotsuka S."/>
            <person name="Yoshikawa Y."/>
            <person name="Matsunawa H."/>
            <person name="Ichihara T."/>
            <person name="Shiohata N."/>
            <person name="Sano S."/>
            <person name="Moriya S."/>
            <person name="Momiyama H."/>
            <person name="Satoh N."/>
            <person name="Takami S."/>
            <person name="Terashima Y."/>
            <person name="Suzuki O."/>
            <person name="Nakagawa S."/>
            <person name="Senoh A."/>
            <person name="Mizoguchi H."/>
            <person name="Goto Y."/>
            <person name="Shimizu F."/>
            <person name="Wakebe H."/>
            <person name="Hishigaki H."/>
            <person name="Watanabe T."/>
            <person name="Sugiyama A."/>
            <person name="Takemoto M."/>
            <person name="Kawakami B."/>
            <person name="Yamazaki M."/>
            <person name="Watanabe K."/>
            <person name="Kumagai A."/>
            <person name="Itakura S."/>
            <person name="Fukuzumi Y."/>
            <person name="Fujimori Y."/>
            <person name="Komiyama M."/>
            <person name="Tashiro H."/>
            <person name="Tanigami A."/>
            <person name="Fujiwara T."/>
            <person name="Ono T."/>
            <person name="Yamada K."/>
            <person name="Fujii Y."/>
            <person name="Ozaki K."/>
            <person name="Hirao M."/>
            <person name="Ohmori Y."/>
            <person name="Kawabata A."/>
            <person name="Hikiji T."/>
            <person name="Kobatake N."/>
            <person name="Inagaki H."/>
            <person name="Ikema Y."/>
            <person name="Okamoto S."/>
            <person name="Okitani R."/>
            <person name="Kawakami T."/>
            <person name="Noguchi S."/>
            <person name="Itoh T."/>
            <person name="Shigeta K."/>
            <person name="Senba T."/>
            <person name="Matsumura K."/>
            <person name="Nakajima Y."/>
            <person name="Mizuno T."/>
            <person name="Morinaga M."/>
            <person name="Sasaki M."/>
            <person name="Togashi T."/>
            <person name="Oyama M."/>
            <person name="Hata H."/>
            <person name="Watanabe M."/>
            <person name="Komatsu T."/>
            <person name="Mizushima-Sugano J."/>
            <person name="Satoh T."/>
            <person name="Shirai Y."/>
            <person name="Takahashi Y."/>
            <person name="Nakagawa K."/>
            <person name="Okumura K."/>
            <person name="Nagase T."/>
            <person name="Nomura N."/>
            <person name="Kikuchi H."/>
            <person name="Masuho Y."/>
            <person name="Yamashita R."/>
            <person name="Nakai K."/>
            <person name="Yada T."/>
            <person name="Nakamura Y."/>
            <person name="Ohara O."/>
            <person name="Isogai T."/>
            <person name="Sugano S."/>
        </authorList>
    </citation>
    <scope>NUCLEOTIDE SEQUENCE [LARGE SCALE MRNA]</scope>
    <source>
        <tissue>Teratocarcinoma</tissue>
    </source>
</reference>
<reference key="3">
    <citation type="journal article" date="2004" name="Nature">
        <title>The DNA sequence and analysis of human chromosome 13.</title>
        <authorList>
            <person name="Dunham A."/>
            <person name="Matthews L.H."/>
            <person name="Burton J."/>
            <person name="Ashurst J.L."/>
            <person name="Howe K.L."/>
            <person name="Ashcroft K.J."/>
            <person name="Beare D.M."/>
            <person name="Burford D.C."/>
            <person name="Hunt S.E."/>
            <person name="Griffiths-Jones S."/>
            <person name="Jones M.C."/>
            <person name="Keenan S.J."/>
            <person name="Oliver K."/>
            <person name="Scott C.E."/>
            <person name="Ainscough R."/>
            <person name="Almeida J.P."/>
            <person name="Ambrose K.D."/>
            <person name="Andrews D.T."/>
            <person name="Ashwell R.I.S."/>
            <person name="Babbage A.K."/>
            <person name="Bagguley C.L."/>
            <person name="Bailey J."/>
            <person name="Bannerjee R."/>
            <person name="Barlow K.F."/>
            <person name="Bates K."/>
            <person name="Beasley H."/>
            <person name="Bird C.P."/>
            <person name="Bray-Allen S."/>
            <person name="Brown A.J."/>
            <person name="Brown J.Y."/>
            <person name="Burrill W."/>
            <person name="Carder C."/>
            <person name="Carter N.P."/>
            <person name="Chapman J.C."/>
            <person name="Clamp M.E."/>
            <person name="Clark S.Y."/>
            <person name="Clarke G."/>
            <person name="Clee C.M."/>
            <person name="Clegg S.C."/>
            <person name="Cobley V."/>
            <person name="Collins J.E."/>
            <person name="Corby N."/>
            <person name="Coville G.J."/>
            <person name="Deloukas P."/>
            <person name="Dhami P."/>
            <person name="Dunham I."/>
            <person name="Dunn M."/>
            <person name="Earthrowl M.E."/>
            <person name="Ellington A.G."/>
            <person name="Faulkner L."/>
            <person name="Frankish A.G."/>
            <person name="Frankland J."/>
            <person name="French L."/>
            <person name="Garner P."/>
            <person name="Garnett J."/>
            <person name="Gilbert J.G.R."/>
            <person name="Gilson C.J."/>
            <person name="Ghori J."/>
            <person name="Grafham D.V."/>
            <person name="Gribble S.M."/>
            <person name="Griffiths C."/>
            <person name="Hall R.E."/>
            <person name="Hammond S."/>
            <person name="Harley J.L."/>
            <person name="Hart E.A."/>
            <person name="Heath P.D."/>
            <person name="Howden P.J."/>
            <person name="Huckle E.J."/>
            <person name="Hunt P.J."/>
            <person name="Hunt A.R."/>
            <person name="Johnson C."/>
            <person name="Johnson D."/>
            <person name="Kay M."/>
            <person name="Kimberley A.M."/>
            <person name="King A."/>
            <person name="Laird G.K."/>
            <person name="Langford C.J."/>
            <person name="Lawlor S."/>
            <person name="Leongamornlert D.A."/>
            <person name="Lloyd D.M."/>
            <person name="Lloyd C."/>
            <person name="Loveland J.E."/>
            <person name="Lovell J."/>
            <person name="Martin S."/>
            <person name="Mashreghi-Mohammadi M."/>
            <person name="McLaren S.J."/>
            <person name="McMurray A."/>
            <person name="Milne S."/>
            <person name="Moore M.J.F."/>
            <person name="Nickerson T."/>
            <person name="Palmer S.A."/>
            <person name="Pearce A.V."/>
            <person name="Peck A.I."/>
            <person name="Pelan S."/>
            <person name="Phillimore B."/>
            <person name="Porter K.M."/>
            <person name="Rice C.M."/>
            <person name="Searle S."/>
            <person name="Sehra H.K."/>
            <person name="Shownkeen R."/>
            <person name="Skuce C.D."/>
            <person name="Smith M."/>
            <person name="Steward C.A."/>
            <person name="Sycamore N."/>
            <person name="Tester J."/>
            <person name="Thomas D.W."/>
            <person name="Tracey A."/>
            <person name="Tromans A."/>
            <person name="Tubby B."/>
            <person name="Wall M."/>
            <person name="Wallis J.M."/>
            <person name="West A.P."/>
            <person name="Whitehead S.L."/>
            <person name="Willey D.L."/>
            <person name="Wilming L."/>
            <person name="Wray P.W."/>
            <person name="Wright M.W."/>
            <person name="Young L."/>
            <person name="Coulson A."/>
            <person name="Durbin R.M."/>
            <person name="Hubbard T."/>
            <person name="Sulston J.E."/>
            <person name="Beck S."/>
            <person name="Bentley D.R."/>
            <person name="Rogers J."/>
            <person name="Ross M.T."/>
        </authorList>
    </citation>
    <scope>NUCLEOTIDE SEQUENCE [LARGE SCALE GENOMIC DNA]</scope>
</reference>
<reference key="4">
    <citation type="submission" date="2005-07" db="EMBL/GenBank/DDBJ databases">
        <authorList>
            <person name="Mural R.J."/>
            <person name="Istrail S."/>
            <person name="Sutton G.G."/>
            <person name="Florea L."/>
            <person name="Halpern A.L."/>
            <person name="Mobarry C.M."/>
            <person name="Lippert R."/>
            <person name="Walenz B."/>
            <person name="Shatkay H."/>
            <person name="Dew I."/>
            <person name="Miller J.R."/>
            <person name="Flanigan M.J."/>
            <person name="Edwards N.J."/>
            <person name="Bolanos R."/>
            <person name="Fasulo D."/>
            <person name="Halldorsson B.V."/>
            <person name="Hannenhalli S."/>
            <person name="Turner R."/>
            <person name="Yooseph S."/>
            <person name="Lu F."/>
            <person name="Nusskern D.R."/>
            <person name="Shue B.C."/>
            <person name="Zheng X.H."/>
            <person name="Zhong F."/>
            <person name="Delcher A.L."/>
            <person name="Huson D.H."/>
            <person name="Kravitz S.A."/>
            <person name="Mouchard L."/>
            <person name="Reinert K."/>
            <person name="Remington K.A."/>
            <person name="Clark A.G."/>
            <person name="Waterman M.S."/>
            <person name="Eichler E.E."/>
            <person name="Adams M.D."/>
            <person name="Hunkapiller M.W."/>
            <person name="Myers E.W."/>
            <person name="Venter J.C."/>
        </authorList>
    </citation>
    <scope>NUCLEOTIDE SEQUENCE [LARGE SCALE GENOMIC DNA]</scope>
</reference>
<reference key="5">
    <citation type="journal article" date="2004" name="Genome Res.">
        <title>The status, quality, and expansion of the NIH full-length cDNA project: the Mammalian Gene Collection (MGC).</title>
        <authorList>
            <consortium name="The MGC Project Team"/>
        </authorList>
    </citation>
    <scope>NUCLEOTIDE SEQUENCE [LARGE SCALE MRNA]</scope>
    <source>
        <tissue>Placenta</tissue>
        <tissue>Skin</tissue>
    </source>
</reference>
<reference key="6">
    <citation type="journal article" date="2006" name="Cell">
        <title>Global, in vivo, and site-specific phosphorylation dynamics in signaling networks.</title>
        <authorList>
            <person name="Olsen J.V."/>
            <person name="Blagoev B."/>
            <person name="Gnad F."/>
            <person name="Macek B."/>
            <person name="Kumar C."/>
            <person name="Mortensen P."/>
            <person name="Mann M."/>
        </authorList>
    </citation>
    <scope>PHOSPHORYLATION [LARGE SCALE ANALYSIS] AT SER-204; SER-217; SER-308; SER-319 AND SER-603</scope>
    <scope>IDENTIFICATION BY MASS SPECTROMETRY [LARGE SCALE ANALYSIS]</scope>
    <source>
        <tissue>Cervix carcinoma</tissue>
    </source>
</reference>
<reference key="7">
    <citation type="journal article" date="2008" name="Proc. Natl. Acad. Sci. U.S.A.">
        <title>A quantitative atlas of mitotic phosphorylation.</title>
        <authorList>
            <person name="Dephoure N."/>
            <person name="Zhou C."/>
            <person name="Villen J."/>
            <person name="Beausoleil S.A."/>
            <person name="Bakalarski C.E."/>
            <person name="Elledge S.J."/>
            <person name="Gygi S.P."/>
        </authorList>
    </citation>
    <scope>PHOSPHORYLATION [LARGE SCALE ANALYSIS] AT SER-204; SER-214; SER-282; SER-286; SER-297; SER-319; SER-405; SER-452; SER-459; SER-462; SER-627; SER-651; SER-652 AND SER-653</scope>
    <scope>IDENTIFICATION BY MASS SPECTROMETRY [LARGE SCALE ANALYSIS]</scope>
    <source>
        <tissue>Cervix carcinoma</tissue>
    </source>
</reference>
<reference key="8">
    <citation type="journal article" date="2009" name="Anal. Chem.">
        <title>Lys-N and trypsin cover complementary parts of the phosphoproteome in a refined SCX-based approach.</title>
        <authorList>
            <person name="Gauci S."/>
            <person name="Helbig A.O."/>
            <person name="Slijper M."/>
            <person name="Krijgsveld J."/>
            <person name="Heck A.J."/>
            <person name="Mohammed S."/>
        </authorList>
    </citation>
    <scope>IDENTIFICATION BY MASS SPECTROMETRY [LARGE SCALE ANALYSIS]</scope>
</reference>
<reference key="9">
    <citation type="journal article" date="2009" name="Sci. Signal.">
        <title>Quantitative phosphoproteomic analysis of T cell receptor signaling reveals system-wide modulation of protein-protein interactions.</title>
        <authorList>
            <person name="Mayya V."/>
            <person name="Lundgren D.H."/>
            <person name="Hwang S.-I."/>
            <person name="Rezaul K."/>
            <person name="Wu L."/>
            <person name="Eng J.K."/>
            <person name="Rodionov V."/>
            <person name="Han D.K."/>
        </authorList>
    </citation>
    <scope>PHOSPHORYLATION [LARGE SCALE ANALYSIS] AT SER-204; SER-214; SER-282; SER-286; SER-297; SER-382; SER-386; SER-507; SER-627; SER-651 AND SER-652</scope>
    <scope>IDENTIFICATION BY MASS SPECTROMETRY [LARGE SCALE ANALYSIS]</scope>
    <source>
        <tissue>Leukemic T-cell</tissue>
    </source>
</reference>
<reference key="10">
    <citation type="journal article" date="2009" name="Science">
        <title>Lysine acetylation targets protein complexes and co-regulates major cellular functions.</title>
        <authorList>
            <person name="Choudhary C."/>
            <person name="Kumar C."/>
            <person name="Gnad F."/>
            <person name="Nielsen M.L."/>
            <person name="Rehman M."/>
            <person name="Walther T.C."/>
            <person name="Olsen J.V."/>
            <person name="Mann M."/>
        </authorList>
    </citation>
    <scope>ACETYLATION [LARGE SCALE ANALYSIS] AT LYS-490</scope>
    <scope>IDENTIFICATION BY MASS SPECTROMETRY [LARGE SCALE ANALYSIS]</scope>
</reference>
<reference key="11">
    <citation type="journal article" date="2010" name="Cell">
        <title>Quantitative interaction proteomics and genome-wide profiling of epigenetic histone marks and their readers.</title>
        <authorList>
            <person name="Vermeulen M."/>
            <person name="Eberl H.C."/>
            <person name="Matarese F."/>
            <person name="Marks H."/>
            <person name="Denissov S."/>
            <person name="Butter F."/>
            <person name="Lee K.K."/>
            <person name="Olsen J.V."/>
            <person name="Hyman A.A."/>
            <person name="Stunnenberg H.G."/>
            <person name="Mann M."/>
        </authorList>
    </citation>
    <scope>INTERACTION WITH POGZ; CBX1; CBX3 AND CBX5</scope>
</reference>
<reference key="12">
    <citation type="journal article" date="2010" name="Sci. Signal.">
        <title>Quantitative phosphoproteomics reveals widespread full phosphorylation site occupancy during mitosis.</title>
        <authorList>
            <person name="Olsen J.V."/>
            <person name="Vermeulen M."/>
            <person name="Santamaria A."/>
            <person name="Kumar C."/>
            <person name="Miller M.L."/>
            <person name="Jensen L.J."/>
            <person name="Gnad F."/>
            <person name="Cox J."/>
            <person name="Jensen T.S."/>
            <person name="Nigg E.A."/>
            <person name="Brunak S."/>
            <person name="Mann M."/>
        </authorList>
    </citation>
    <scope>PHOSPHORYLATION [LARGE SCALE ANALYSIS] AT SER-87; SER-275; SER-282; SER-286; SER-297; SER-308; SER-319; SER-405; SER-427; SER-432; SER-436; SER-445; SER-459; SER-476; SER-542; SER-603; SER-627; SER-632; SER-651; SER-653; SER-675 AND SER-736</scope>
    <scope>IDENTIFICATION BY MASS SPECTROMETRY [LARGE SCALE ANALYSIS]</scope>
    <source>
        <tissue>Cervix carcinoma</tissue>
    </source>
</reference>
<reference key="13">
    <citation type="journal article" date="2011" name="BMC Syst. Biol.">
        <title>Initial characterization of the human central proteome.</title>
        <authorList>
            <person name="Burkard T.R."/>
            <person name="Planyavsky M."/>
            <person name="Kaupe I."/>
            <person name="Breitwieser F.P."/>
            <person name="Buerckstuemmer T."/>
            <person name="Bennett K.L."/>
            <person name="Superti-Furga G."/>
            <person name="Colinge J."/>
        </authorList>
    </citation>
    <scope>IDENTIFICATION BY MASS SPECTROMETRY [LARGE SCALE ANALYSIS]</scope>
</reference>
<reference key="14">
    <citation type="journal article" date="2011" name="EMBO J.">
        <title>CAMP (C13orf8, ZNF828) is a novel regulator of kinetochore-microtubule attachment.</title>
        <authorList>
            <person name="Itoh G."/>
            <person name="Kanno S."/>
            <person name="Uchida K.S."/>
            <person name="Chiba S."/>
            <person name="Sugino S."/>
            <person name="Watanabe K."/>
            <person name="Mizuno K."/>
            <person name="Yasui A."/>
            <person name="Hirota T."/>
            <person name="Tanaka K."/>
        </authorList>
    </citation>
    <scope>IDENTIFICATION BY MASS SPECTROMETRY</scope>
    <scope>FUNCTION</scope>
    <scope>INTERACTION WITH MAD2L2</scope>
    <scope>SUBCELLULAR LOCATION</scope>
    <scope>PHOSPHORYLATION</scope>
</reference>
<reference key="15">
    <citation type="journal article" date="2011" name="Sci. Signal.">
        <title>System-wide temporal characterization of the proteome and phosphoproteome of human embryonic stem cell differentiation.</title>
        <authorList>
            <person name="Rigbolt K.T."/>
            <person name="Prokhorova T.A."/>
            <person name="Akimov V."/>
            <person name="Henningsen J."/>
            <person name="Johansen P.T."/>
            <person name="Kratchmarova I."/>
            <person name="Kassem M."/>
            <person name="Mann M."/>
            <person name="Olsen J.V."/>
            <person name="Blagoev B."/>
        </authorList>
    </citation>
    <scope>PHOSPHORYLATION [LARGE SCALE ANALYSIS] AT SER-108; SER-184; SER-214; SER-247; SER-253; SER-275; SER-286; SER-297; SER-308; SER-344; SER-355; SER-382; SER-405; SER-416; SER-427; SER-443; SER-445; SER-459; SER-476; SER-507; SER-626 AND SER-627</scope>
    <scope>IDENTIFICATION BY MASS SPECTROMETRY [LARGE SCALE ANALYSIS]</scope>
</reference>
<reference key="16">
    <citation type="journal article" date="2012" name="Proc. Natl. Acad. Sci. U.S.A.">
        <title>N-terminal acetylome analyses and functional insights of the N-terminal acetyltransferase NatB.</title>
        <authorList>
            <person name="Van Damme P."/>
            <person name="Lasa M."/>
            <person name="Polevoda B."/>
            <person name="Gazquez C."/>
            <person name="Elosegui-Artola A."/>
            <person name="Kim D.S."/>
            <person name="De Juan-Pardo E."/>
            <person name="Demeyer K."/>
            <person name="Hole K."/>
            <person name="Larrea E."/>
            <person name="Timmerman E."/>
            <person name="Prieto J."/>
            <person name="Arnesen T."/>
            <person name="Sherman F."/>
            <person name="Gevaert K."/>
            <person name="Aldabe R."/>
        </authorList>
    </citation>
    <scope>ACETYLATION [LARGE SCALE ANALYSIS] AT MET-1</scope>
    <scope>IDENTIFICATION BY MASS SPECTROMETRY [LARGE SCALE ANALYSIS]</scope>
</reference>
<reference key="17">
    <citation type="journal article" date="2013" name="J. Proteome Res.">
        <title>Toward a comprehensive characterization of a human cancer cell phosphoproteome.</title>
        <authorList>
            <person name="Zhou H."/>
            <person name="Di Palma S."/>
            <person name="Preisinger C."/>
            <person name="Peng M."/>
            <person name="Polat A.N."/>
            <person name="Heck A.J."/>
            <person name="Mohammed S."/>
        </authorList>
    </citation>
    <scope>PHOSPHORYLATION [LARGE SCALE ANALYSIS] AT SER-87; SER-108; SER-204; SER-214; SER-282; SER-286; SER-308; SER-319; SER-376; SER-382; SER-386; SER-405; SER-416; SER-427; SER-432; SER-436; SER-445; SER-452; THR-458; SER-459; SER-462; SER-472; SER-476; SER-507; SER-512; SER-542; SER-572; SER-603; SER-615; SER-627; SER-632 AND SER-675</scope>
    <scope>IDENTIFICATION BY MASS SPECTROMETRY [LARGE SCALE ANALYSIS]</scope>
    <source>
        <tissue>Cervix carcinoma</tissue>
        <tissue>Erythroleukemia</tissue>
    </source>
</reference>
<reference key="18">
    <citation type="journal article" date="2014" name="J. Proteomics">
        <title>An enzyme assisted RP-RPLC approach for in-depth analysis of human liver phosphoproteome.</title>
        <authorList>
            <person name="Bian Y."/>
            <person name="Song C."/>
            <person name="Cheng K."/>
            <person name="Dong M."/>
            <person name="Wang F."/>
            <person name="Huang J."/>
            <person name="Sun D."/>
            <person name="Wang L."/>
            <person name="Ye M."/>
            <person name="Zou H."/>
        </authorList>
    </citation>
    <scope>PHOSPHORYLATION [LARGE SCALE ANALYSIS] AT SER-173; SER-204; SER-214; SER-247; SER-264; SER-282; SER-286; SER-376; THR-403; SER-405; SER-416; SER-427; SER-476; SER-507 AND SER-542</scope>
    <scope>IDENTIFICATION BY MASS SPECTROMETRY [LARGE SCALE ANALYSIS]</scope>
    <source>
        <tissue>Liver</tissue>
    </source>
</reference>
<reference key="19">
    <citation type="journal article" date="2014" name="Nat. Struct. Mol. Biol.">
        <title>Uncovering global SUMOylation signaling networks in a site-specific manner.</title>
        <authorList>
            <person name="Hendriks I.A."/>
            <person name="D'Souza R.C."/>
            <person name="Yang B."/>
            <person name="Verlaan-de Vries M."/>
            <person name="Mann M."/>
            <person name="Vertegaal A.C."/>
        </authorList>
    </citation>
    <scope>SUMOYLATION [LARGE SCALE ANALYSIS] AT LYS-670</scope>
    <scope>IDENTIFICATION BY MASS SPECTROMETRY [LARGE SCALE ANALYSIS]</scope>
</reference>
<reference key="20">
    <citation type="journal article" date="2015" name="Am. J. Hum. Genet.">
        <title>De novo mutations in CHAMP1 cause intellectual disability with severe speech impairment.</title>
        <authorList>
            <person name="Hempel M."/>
            <person name="Cremer K."/>
            <person name="Ockeloen C.W."/>
            <person name="Lichtenbelt K.D."/>
            <person name="Herkert J.C."/>
            <person name="Denecke J."/>
            <person name="Haack T.B."/>
            <person name="Zink A.M."/>
            <person name="Becker J."/>
            <person name="Wohlleber E."/>
            <person name="Johannsen J."/>
            <person name="Alhaddad B."/>
            <person name="Pfundt R."/>
            <person name="Fuchs S."/>
            <person name="Wieczorek D."/>
            <person name="Strom T.M."/>
            <person name="van Gassen K.L."/>
            <person name="Kleefstra T."/>
            <person name="Kubisch C."/>
            <person name="Engels H."/>
            <person name="Lessel D."/>
        </authorList>
    </citation>
    <scope>INVOLVEMENT IN NEDHILD</scope>
</reference>
<reference key="21">
    <citation type="journal article" date="2015" name="Cell Rep.">
        <title>SUMO-2 orchestrates chromatin modifiers in response to DNA damage.</title>
        <authorList>
            <person name="Hendriks I.A."/>
            <person name="Treffers L.W."/>
            <person name="Verlaan-de Vries M."/>
            <person name="Olsen J.V."/>
            <person name="Vertegaal A.C."/>
        </authorList>
    </citation>
    <scope>SUMOYLATION [LARGE SCALE ANALYSIS] AT LYS-490</scope>
    <scope>IDENTIFICATION BY MASS SPECTROMETRY [LARGE SCALE ANALYSIS]</scope>
</reference>
<reference key="22">
    <citation type="journal article" date="2015" name="Nature">
        <title>Large-scale discovery of novel genetic causes of developmental disorders.</title>
        <authorList>
            <consortium name="Deciphering Developmental Disorders Study"/>
        </authorList>
    </citation>
    <scope>INVOLVEMENT IN NEDHILD</scope>
</reference>
<reference key="23">
    <citation type="journal article" date="2017" name="Nat. Struct. Mol. Biol.">
        <title>Site-specific mapping of the human SUMO proteome reveals co-modification with phosphorylation.</title>
        <authorList>
            <person name="Hendriks I.A."/>
            <person name="Lyon D."/>
            <person name="Young C."/>
            <person name="Jensen L.J."/>
            <person name="Vertegaal A.C."/>
            <person name="Nielsen M.L."/>
        </authorList>
    </citation>
    <scope>SUMOYLATION [LARGE SCALE ANALYSIS] AT LYS-490; LYS-565; LYS-606; LYS-638; LYS-670 AND LYS-689</scope>
    <scope>IDENTIFICATION BY MASS SPECTROMETRY [LARGE SCALE ANALYSIS]</scope>
</reference>
<dbReference type="EMBL" id="AB058705">
    <property type="protein sequence ID" value="BAB47431.1"/>
    <property type="status" value="ALT_INIT"/>
    <property type="molecule type" value="mRNA"/>
</dbReference>
<dbReference type="EMBL" id="AK074894">
    <property type="protein sequence ID" value="BAC11273.1"/>
    <property type="status" value="ALT_INIT"/>
    <property type="molecule type" value="mRNA"/>
</dbReference>
<dbReference type="EMBL" id="AK096346">
    <property type="protein sequence ID" value="BAG53268.1"/>
    <property type="molecule type" value="mRNA"/>
</dbReference>
<dbReference type="EMBL" id="AL845154">
    <property type="status" value="NOT_ANNOTATED_CDS"/>
    <property type="molecule type" value="Genomic_DNA"/>
</dbReference>
<dbReference type="EMBL" id="CH471085">
    <property type="protein sequence ID" value="EAX09253.1"/>
    <property type="molecule type" value="Genomic_DNA"/>
</dbReference>
<dbReference type="EMBL" id="BC004820">
    <property type="protein sequence ID" value="AAH04820.1"/>
    <property type="molecule type" value="mRNA"/>
</dbReference>
<dbReference type="EMBL" id="BC065237">
    <property type="protein sequence ID" value="AAH65237.1"/>
    <property type="molecule type" value="mRNA"/>
</dbReference>
<dbReference type="CCDS" id="CCDS9545.1"/>
<dbReference type="RefSeq" id="NP_001157616.1">
    <property type="nucleotide sequence ID" value="NM_001164144.3"/>
</dbReference>
<dbReference type="RefSeq" id="NP_001157617.1">
    <property type="nucleotide sequence ID" value="NM_001164145.3"/>
</dbReference>
<dbReference type="RefSeq" id="NP_115812.1">
    <property type="nucleotide sequence ID" value="NM_032436.4"/>
</dbReference>
<dbReference type="RefSeq" id="XP_047286233.1">
    <property type="nucleotide sequence ID" value="XM_047430277.1"/>
</dbReference>
<dbReference type="RefSeq" id="XP_054230444.1">
    <property type="nucleotide sequence ID" value="XM_054374469.1"/>
</dbReference>
<dbReference type="PDB" id="5XPT">
    <property type="method" value="X-ray"/>
    <property type="resolution" value="2.10 A"/>
    <property type="chains" value="B=325-344"/>
</dbReference>
<dbReference type="PDB" id="5XPU">
    <property type="method" value="X-ray"/>
    <property type="resolution" value="2.30 A"/>
    <property type="chains" value="B=325-344"/>
</dbReference>
<dbReference type="PDB" id="6EKJ">
    <property type="method" value="X-ray"/>
    <property type="resolution" value="1.60 A"/>
    <property type="chains" value="B=328-355"/>
</dbReference>
<dbReference type="PDB" id="6EKL">
    <property type="method" value="X-ray"/>
    <property type="resolution" value="1.60 A"/>
    <property type="chains" value="B=328-355"/>
</dbReference>
<dbReference type="PDBsum" id="5XPT"/>
<dbReference type="PDBsum" id="5XPU"/>
<dbReference type="PDBsum" id="6EKJ"/>
<dbReference type="PDBsum" id="6EKL"/>
<dbReference type="SMR" id="Q96JM3"/>
<dbReference type="BioGRID" id="129584">
    <property type="interactions" value="151"/>
</dbReference>
<dbReference type="FunCoup" id="Q96JM3">
    <property type="interactions" value="2879"/>
</dbReference>
<dbReference type="IntAct" id="Q96JM3">
    <property type="interactions" value="85"/>
</dbReference>
<dbReference type="MINT" id="Q96JM3"/>
<dbReference type="STRING" id="9606.ENSP00000496699"/>
<dbReference type="GlyCosmos" id="Q96JM3">
    <property type="glycosylation" value="7 sites, 2 glycans"/>
</dbReference>
<dbReference type="GlyGen" id="Q96JM3">
    <property type="glycosylation" value="8 sites, 2 O-linked glycans (8 sites)"/>
</dbReference>
<dbReference type="iPTMnet" id="Q96JM3"/>
<dbReference type="PhosphoSitePlus" id="Q96JM3"/>
<dbReference type="SwissPalm" id="Q96JM3"/>
<dbReference type="BioMuta" id="CHAMP1"/>
<dbReference type="DMDM" id="114149935"/>
<dbReference type="jPOST" id="Q96JM3"/>
<dbReference type="MassIVE" id="Q96JM3"/>
<dbReference type="PaxDb" id="9606-ENSP00000354730"/>
<dbReference type="PeptideAtlas" id="Q96JM3"/>
<dbReference type="ProteomicsDB" id="76984"/>
<dbReference type="Pumba" id="Q96JM3"/>
<dbReference type="Antibodypedia" id="1883">
    <property type="antibodies" value="140 antibodies from 23 providers"/>
</dbReference>
<dbReference type="DNASU" id="283489"/>
<dbReference type="Ensembl" id="ENST00000361283.4">
    <property type="protein sequence ID" value="ENSP00000354730.1"/>
    <property type="gene ID" value="ENSG00000198824.8"/>
</dbReference>
<dbReference type="Ensembl" id="ENST00000643483.2">
    <property type="protein sequence ID" value="ENSP00000496699.1"/>
    <property type="gene ID" value="ENSG00000198824.8"/>
</dbReference>
<dbReference type="Ensembl" id="ENST00000644294.2">
    <property type="protein sequence ID" value="ENSP00000495985.2"/>
    <property type="gene ID" value="ENSG00000198824.8"/>
</dbReference>
<dbReference type="Ensembl" id="ENST00000645174.2">
    <property type="protein sequence ID" value="ENSP00000494031.2"/>
    <property type="gene ID" value="ENSG00000198824.8"/>
</dbReference>
<dbReference type="Ensembl" id="ENST00000700527.1">
    <property type="protein sequence ID" value="ENSP00000515032.1"/>
    <property type="gene ID" value="ENSG00000198824.8"/>
</dbReference>
<dbReference type="Ensembl" id="ENST00000700528.1">
    <property type="protein sequence ID" value="ENSP00000515033.1"/>
    <property type="gene ID" value="ENSG00000198824.8"/>
</dbReference>
<dbReference type="GeneID" id="283489"/>
<dbReference type="KEGG" id="hsa:283489"/>
<dbReference type="MANE-Select" id="ENST00000361283.4">
    <property type="protein sequence ID" value="ENSP00000354730.1"/>
    <property type="RefSeq nucleotide sequence ID" value="NM_032436.4"/>
    <property type="RefSeq protein sequence ID" value="NP_115812.1"/>
</dbReference>
<dbReference type="UCSC" id="uc001vuv.4">
    <property type="organism name" value="human"/>
</dbReference>
<dbReference type="AGR" id="HGNC:20311"/>
<dbReference type="CTD" id="283489"/>
<dbReference type="DisGeNET" id="283489"/>
<dbReference type="GeneCards" id="CHAMP1"/>
<dbReference type="HGNC" id="HGNC:20311">
    <property type="gene designation" value="CHAMP1"/>
</dbReference>
<dbReference type="HPA" id="ENSG00000198824">
    <property type="expression patterns" value="Low tissue specificity"/>
</dbReference>
<dbReference type="MalaCards" id="CHAMP1"/>
<dbReference type="MIM" id="616327">
    <property type="type" value="gene"/>
</dbReference>
<dbReference type="MIM" id="616579">
    <property type="type" value="phenotype"/>
</dbReference>
<dbReference type="neXtProt" id="NX_Q96JM3"/>
<dbReference type="OpenTargets" id="ENSG00000198824"/>
<dbReference type="Orphanet" id="692193">
    <property type="disease" value="CHAMP1-related intellectual disability-facial dysmorphism-behavioral abnormalities syndrome"/>
</dbReference>
<dbReference type="PharmGKB" id="PA162410749"/>
<dbReference type="VEuPathDB" id="HostDB:ENSG00000198824"/>
<dbReference type="eggNOG" id="ENOG502QXNS">
    <property type="taxonomic scope" value="Eukaryota"/>
</dbReference>
<dbReference type="GeneTree" id="ENSGT00730000111351"/>
<dbReference type="HOGENOM" id="CLU_019515_0_0_1"/>
<dbReference type="InParanoid" id="Q96JM3"/>
<dbReference type="OMA" id="WKPIPSI"/>
<dbReference type="OrthoDB" id="8016097at2759"/>
<dbReference type="PAN-GO" id="Q96JM3">
    <property type="GO annotations" value="6 GO annotations based on evolutionary models"/>
</dbReference>
<dbReference type="PhylomeDB" id="Q96JM3"/>
<dbReference type="TreeFam" id="TF350859"/>
<dbReference type="PathwayCommons" id="Q96JM3"/>
<dbReference type="SignaLink" id="Q96JM3"/>
<dbReference type="SIGNOR" id="Q96JM3"/>
<dbReference type="BioGRID-ORCS" id="283489">
    <property type="hits" value="45 hits in 1163 CRISPR screens"/>
</dbReference>
<dbReference type="CD-CODE" id="8C2F96ED">
    <property type="entry name" value="Centrosome"/>
</dbReference>
<dbReference type="ChiTaRS" id="CHAMP1">
    <property type="organism name" value="human"/>
</dbReference>
<dbReference type="GeneWiki" id="C13orf8"/>
<dbReference type="GenomeRNAi" id="283489"/>
<dbReference type="Pharos" id="Q96JM3">
    <property type="development level" value="Tbio"/>
</dbReference>
<dbReference type="PRO" id="PR:Q96JM3"/>
<dbReference type="Proteomes" id="UP000005640">
    <property type="component" value="Chromosome 13"/>
</dbReference>
<dbReference type="RNAct" id="Q96JM3">
    <property type="molecule type" value="protein"/>
</dbReference>
<dbReference type="Bgee" id="ENSG00000198824">
    <property type="expression patterns" value="Expressed in ileal mucosa and 174 other cell types or tissues"/>
</dbReference>
<dbReference type="ExpressionAtlas" id="Q96JM3">
    <property type="expression patterns" value="baseline and differential"/>
</dbReference>
<dbReference type="GO" id="GO:0000793">
    <property type="term" value="C:condensed chromosome"/>
    <property type="evidence" value="ECO:0000314"/>
    <property type="project" value="UniProtKB"/>
</dbReference>
<dbReference type="GO" id="GO:0005737">
    <property type="term" value="C:cytoplasm"/>
    <property type="evidence" value="ECO:0007669"/>
    <property type="project" value="UniProtKB-KW"/>
</dbReference>
<dbReference type="GO" id="GO:0000776">
    <property type="term" value="C:kinetochore"/>
    <property type="evidence" value="ECO:0000314"/>
    <property type="project" value="UniProtKB"/>
</dbReference>
<dbReference type="GO" id="GO:0016604">
    <property type="term" value="C:nuclear body"/>
    <property type="evidence" value="ECO:0000314"/>
    <property type="project" value="HPA"/>
</dbReference>
<dbReference type="GO" id="GO:0005654">
    <property type="term" value="C:nucleoplasm"/>
    <property type="evidence" value="ECO:0000314"/>
    <property type="project" value="HPA"/>
</dbReference>
<dbReference type="GO" id="GO:0005634">
    <property type="term" value="C:nucleus"/>
    <property type="evidence" value="ECO:0000314"/>
    <property type="project" value="UniProtKB"/>
</dbReference>
<dbReference type="GO" id="GO:0005819">
    <property type="term" value="C:spindle"/>
    <property type="evidence" value="ECO:0000314"/>
    <property type="project" value="UniProtKB"/>
</dbReference>
<dbReference type="GO" id="GO:0008270">
    <property type="term" value="F:zinc ion binding"/>
    <property type="evidence" value="ECO:0007669"/>
    <property type="project" value="UniProtKB-KW"/>
</dbReference>
<dbReference type="GO" id="GO:0051315">
    <property type="term" value="P:attachment of mitotic spindle microtubules to kinetochore"/>
    <property type="evidence" value="ECO:0000315"/>
    <property type="project" value="UniProtKB"/>
</dbReference>
<dbReference type="GO" id="GO:0034501">
    <property type="term" value="P:protein localization to kinetochore"/>
    <property type="evidence" value="ECO:0000315"/>
    <property type="project" value="UniProtKB"/>
</dbReference>
<dbReference type="GO" id="GO:0035372">
    <property type="term" value="P:protein localization to microtubule"/>
    <property type="evidence" value="ECO:0000315"/>
    <property type="project" value="UniProtKB"/>
</dbReference>
<dbReference type="GO" id="GO:0031134">
    <property type="term" value="P:sister chromatid biorientation"/>
    <property type="evidence" value="ECO:0000315"/>
    <property type="project" value="UniProtKB"/>
</dbReference>
<dbReference type="FunFam" id="3.30.160.60:FF:000879">
    <property type="entry name" value="Chromosome alignment maintaining phosphoprotein 1"/>
    <property type="match status" value="1"/>
</dbReference>
<dbReference type="FunFam" id="3.30.160.60:FF:001769">
    <property type="entry name" value="chromosome alignment-maintaining phosphoprotein 1"/>
    <property type="match status" value="1"/>
</dbReference>
<dbReference type="Gene3D" id="3.30.160.60">
    <property type="entry name" value="Classic Zinc Finger"/>
    <property type="match status" value="2"/>
</dbReference>
<dbReference type="InterPro" id="IPR039330">
    <property type="entry name" value="CAMP"/>
</dbReference>
<dbReference type="InterPro" id="IPR036236">
    <property type="entry name" value="Znf_C2H2_sf"/>
</dbReference>
<dbReference type="InterPro" id="IPR013087">
    <property type="entry name" value="Znf_C2H2_type"/>
</dbReference>
<dbReference type="PANTHER" id="PTHR37354">
    <property type="entry name" value="CHROMOSOME ALIGNMENT-MAINTAINING PHOSPHOPROTEIN 1"/>
    <property type="match status" value="1"/>
</dbReference>
<dbReference type="PANTHER" id="PTHR37354:SF1">
    <property type="entry name" value="CHROMOSOME ALIGNMENT-MAINTAINING PHOSPHOPROTEIN 1"/>
    <property type="match status" value="1"/>
</dbReference>
<dbReference type="PRINTS" id="PR01217">
    <property type="entry name" value="PRICHEXTENSN"/>
</dbReference>
<dbReference type="SMART" id="SM00355">
    <property type="entry name" value="ZnF_C2H2"/>
    <property type="match status" value="5"/>
</dbReference>
<dbReference type="SUPFAM" id="SSF57667">
    <property type="entry name" value="beta-beta-alpha zinc fingers"/>
    <property type="match status" value="1"/>
</dbReference>
<dbReference type="PROSITE" id="PS00028">
    <property type="entry name" value="ZINC_FINGER_C2H2_1"/>
    <property type="match status" value="1"/>
</dbReference>
<dbReference type="PROSITE" id="PS50157">
    <property type="entry name" value="ZINC_FINGER_C2H2_2"/>
    <property type="match status" value="1"/>
</dbReference>
<protein>
    <recommendedName>
        <fullName>Chromosome alignment-maintaining phosphoprotein 1</fullName>
    </recommendedName>
    <alternativeName>
        <fullName>Zinc finger protein 828</fullName>
    </alternativeName>
</protein>
<accession>Q96JM3</accession>
<accession>B3KU06</accession>
<accession>Q6P181</accession>
<accession>Q8NC88</accession>
<accession>Q9BST0</accession>
<feature type="chain" id="PRO_0000248319" description="Chromosome alignment-maintaining phosphoprotein 1">
    <location>
        <begin position="1"/>
        <end position="812"/>
    </location>
</feature>
<feature type="zinc finger region" description="C2H2-type" evidence="2">
    <location>
        <begin position="738"/>
        <end position="760"/>
    </location>
</feature>
<feature type="region of interest" description="Disordered" evidence="3">
    <location>
        <begin position="86"/>
        <end position="124"/>
    </location>
</feature>
<feature type="region of interest" description="Disordered" evidence="3">
    <location>
        <begin position="136"/>
        <end position="546"/>
    </location>
</feature>
<feature type="region of interest" description="Mediates interaction with MAD2L2" evidence="5">
    <location>
        <begin position="271"/>
        <end position="490"/>
    </location>
</feature>
<feature type="region of interest" description="Mediates localization to the spindle and the kinetochore and is required for the attachment of spindle microtubules to the kinetochore">
    <location>
        <begin position="451"/>
        <end position="590"/>
    </location>
</feature>
<feature type="region of interest" description="Mediates localization to the chromosome and the spindle and negatively regulates chromosome alignment">
    <location>
        <begin position="591"/>
        <end position="812"/>
    </location>
</feature>
<feature type="compositionally biased region" description="Basic and acidic residues" evidence="3">
    <location>
        <begin position="86"/>
        <end position="105"/>
    </location>
</feature>
<feature type="compositionally biased region" description="Pro residues" evidence="3">
    <location>
        <begin position="202"/>
        <end position="213"/>
    </location>
</feature>
<feature type="compositionally biased region" description="Polar residues" evidence="3">
    <location>
        <begin position="220"/>
        <end position="233"/>
    </location>
</feature>
<feature type="compositionally biased region" description="Pro residues" evidence="3">
    <location>
        <begin position="284"/>
        <end position="297"/>
    </location>
</feature>
<feature type="compositionally biased region" description="Pro residues" evidence="3">
    <location>
        <begin position="336"/>
        <end position="361"/>
    </location>
</feature>
<feature type="compositionally biased region" description="Low complexity" evidence="3">
    <location>
        <begin position="363"/>
        <end position="392"/>
    </location>
</feature>
<feature type="compositionally biased region" description="Low complexity" evidence="3">
    <location>
        <begin position="499"/>
        <end position="512"/>
    </location>
</feature>
<feature type="modified residue" description="N-acetylmethionine" evidence="13">
    <location>
        <position position="1"/>
    </location>
</feature>
<feature type="modified residue" description="Phosphoserine" evidence="11 14">
    <location>
        <position position="87"/>
    </location>
</feature>
<feature type="modified residue" description="Phosphoserine" evidence="12 14">
    <location>
        <position position="108"/>
    </location>
</feature>
<feature type="modified residue" description="Phosphoserine" evidence="15">
    <location>
        <position position="173"/>
    </location>
</feature>
<feature type="modified residue" description="Phosphoserine" evidence="12">
    <location>
        <position position="184"/>
    </location>
</feature>
<feature type="modified residue" description="Phosphoserine" evidence="7 8 10 14 15">
    <location>
        <position position="204"/>
    </location>
</feature>
<feature type="modified residue" description="Phosphoserine" evidence="8 10 12 14 15">
    <location>
        <position position="214"/>
    </location>
</feature>
<feature type="modified residue" description="Phosphoserine" evidence="7">
    <location>
        <position position="217"/>
    </location>
</feature>
<feature type="modified residue" description="Phosphoserine" evidence="1">
    <location>
        <position position="244"/>
    </location>
</feature>
<feature type="modified residue" description="Phosphoserine" evidence="12 15">
    <location>
        <position position="247"/>
    </location>
</feature>
<feature type="modified residue" description="Phosphoserine" evidence="12">
    <location>
        <position position="253"/>
    </location>
</feature>
<feature type="modified residue" description="Phosphoserine" evidence="15">
    <location>
        <position position="264"/>
    </location>
</feature>
<feature type="modified residue" description="Phosphoserine" evidence="11 12">
    <location>
        <position position="275"/>
    </location>
</feature>
<feature type="modified residue" description="Phosphoserine" evidence="8 10 11 14 15">
    <location>
        <position position="282"/>
    </location>
</feature>
<feature type="modified residue" description="Phosphoserine" evidence="8 10 11 12 14 15">
    <location>
        <position position="286"/>
    </location>
</feature>
<feature type="modified residue" description="Phosphoserine" evidence="8 10 11 12">
    <location>
        <position position="297"/>
    </location>
</feature>
<feature type="modified residue" description="Phosphoserine" evidence="7 11 12 14">
    <location>
        <position position="308"/>
    </location>
</feature>
<feature type="modified residue" description="Phosphoserine" evidence="7 8 11 14">
    <location>
        <position position="319"/>
    </location>
</feature>
<feature type="modified residue" description="Phosphoserine" evidence="12">
    <location>
        <position position="344"/>
    </location>
</feature>
<feature type="modified residue" description="Phosphoserine" evidence="12">
    <location>
        <position position="355"/>
    </location>
</feature>
<feature type="modified residue" description="Phosphoserine" evidence="14 15">
    <location>
        <position position="376"/>
    </location>
</feature>
<feature type="modified residue" description="Phosphoserine" evidence="10 12 14">
    <location>
        <position position="382"/>
    </location>
</feature>
<feature type="modified residue" description="Phosphoserine" evidence="10 14">
    <location>
        <position position="386"/>
    </location>
</feature>
<feature type="modified residue" description="Phosphothreonine" evidence="15">
    <location>
        <position position="403"/>
    </location>
</feature>
<feature type="modified residue" description="Phosphoserine" evidence="8 11 12 14 15">
    <location>
        <position position="405"/>
    </location>
</feature>
<feature type="modified residue" description="Phosphoserine" evidence="12 14 15">
    <location>
        <position position="416"/>
    </location>
</feature>
<feature type="modified residue" description="Phosphoserine" evidence="11 12 14 15">
    <location>
        <position position="427"/>
    </location>
</feature>
<feature type="modified residue" description="Phosphoserine" evidence="11 14">
    <location>
        <position position="432"/>
    </location>
</feature>
<feature type="modified residue" description="Phosphoserine" evidence="11 14">
    <location>
        <position position="436"/>
    </location>
</feature>
<feature type="modified residue" description="Phosphoserine" evidence="12">
    <location>
        <position position="443"/>
    </location>
</feature>
<feature type="modified residue" description="Phosphoserine" evidence="11 12 14">
    <location>
        <position position="445"/>
    </location>
</feature>
<feature type="modified residue" description="Phosphoserine" evidence="8 14">
    <location>
        <position position="452"/>
    </location>
</feature>
<feature type="modified residue" description="Phosphothreonine" evidence="14">
    <location>
        <position position="458"/>
    </location>
</feature>
<feature type="modified residue" description="Phosphoserine" evidence="8 11 12 14">
    <location>
        <position position="459"/>
    </location>
</feature>
<feature type="modified residue" description="Phosphoserine" evidence="8 14">
    <location>
        <position position="462"/>
    </location>
</feature>
<feature type="modified residue" description="Phosphoserine" evidence="14">
    <location>
        <position position="472"/>
    </location>
</feature>
<feature type="modified residue" description="Phosphoserine" evidence="11 12 14 15">
    <location>
        <position position="476"/>
    </location>
</feature>
<feature type="modified residue" description="N6-acetyllysine; alternate" evidence="9">
    <location>
        <position position="490"/>
    </location>
</feature>
<feature type="modified residue" description="Phosphoserine" evidence="10 12 14 15">
    <location>
        <position position="507"/>
    </location>
</feature>
<feature type="modified residue" description="Phosphoserine" evidence="14">
    <location>
        <position position="512"/>
    </location>
</feature>
<feature type="modified residue" description="Phosphoserine" evidence="11 14 15">
    <location>
        <position position="542"/>
    </location>
</feature>
<feature type="modified residue" description="Phosphoserine" evidence="14">
    <location>
        <position position="572"/>
    </location>
</feature>
<feature type="modified residue" description="Phosphoserine" evidence="7 11 14">
    <location>
        <position position="603"/>
    </location>
</feature>
<feature type="modified residue" description="Phosphoserine" evidence="14">
    <location>
        <position position="615"/>
    </location>
</feature>
<feature type="modified residue" description="Phosphoserine" evidence="12">
    <location>
        <position position="626"/>
    </location>
</feature>
<feature type="modified residue" description="Phosphoserine" evidence="8 10 11 12 14">
    <location>
        <position position="627"/>
    </location>
</feature>
<feature type="modified residue" description="Phosphoserine" evidence="11 14">
    <location>
        <position position="632"/>
    </location>
</feature>
<feature type="modified residue" description="Phosphoserine" evidence="8 10 11">
    <location>
        <position position="651"/>
    </location>
</feature>
<feature type="modified residue" description="Phosphoserine" evidence="8 10">
    <location>
        <position position="652"/>
    </location>
</feature>
<feature type="modified residue" description="Phosphoserine" evidence="8 11">
    <location>
        <position position="653"/>
    </location>
</feature>
<feature type="modified residue" description="Phosphoserine" evidence="11 14">
    <location>
        <position position="675"/>
    </location>
</feature>
<feature type="modified residue" description="Phosphoserine" evidence="11">
    <location>
        <position position="736"/>
    </location>
</feature>
<feature type="cross-link" description="Glycyl lysine isopeptide (Lys-Gly) (interchain with G-Cter in SUMO2); alternate" evidence="17 18">
    <location>
        <position position="490"/>
    </location>
</feature>
<feature type="cross-link" description="Glycyl lysine isopeptide (Lys-Gly) (interchain with G-Cter in SUMO2)" evidence="18">
    <location>
        <position position="565"/>
    </location>
</feature>
<feature type="cross-link" description="Glycyl lysine isopeptide (Lys-Gly) (interchain with G-Cter in SUMO2)" evidence="18">
    <location>
        <position position="606"/>
    </location>
</feature>
<feature type="cross-link" description="Glycyl lysine isopeptide (Lys-Gly) (interchain with G-Cter in SUMO2)" evidence="18">
    <location>
        <position position="638"/>
    </location>
</feature>
<feature type="cross-link" description="Glycyl lysine isopeptide (Lys-Gly) (interchain with G-Cter in SUMO2)" evidence="16 18">
    <location>
        <position position="670"/>
    </location>
</feature>
<feature type="cross-link" description="Glycyl lysine isopeptide (Lys-Gly) (interchain with G-Cter in SUMO2)" evidence="18">
    <location>
        <position position="689"/>
    </location>
</feature>
<feature type="sequence variant" id="VAR_027270" description="In dbSNP:rs3764522.">
    <original>L</original>
    <variation>V</variation>
    <location>
        <position position="568"/>
    </location>
</feature>
<feature type="sequence variant" id="VAR_052910" description="In dbSNP:rs35564629.">
    <original>K</original>
    <variation>R</variation>
    <location>
        <position position="591"/>
    </location>
</feature>
<feature type="sequence variant" id="VAR_027271" description="In dbSNP:rs12428067.">
    <original>P</original>
    <variation>R</variation>
    <location>
        <position position="604"/>
    </location>
</feature>
<feature type="sequence conflict" description="In Ref. 2; BAC11273." evidence="6" ref="2">
    <original>I</original>
    <variation>T</variation>
    <location>
        <position position="81"/>
    </location>
</feature>
<feature type="sequence conflict" description="In Ref. 2; BAC11273." evidence="6" ref="2">
    <original>V</original>
    <variation>A</variation>
    <location>
        <position position="140"/>
    </location>
</feature>
<feature type="sequence conflict" description="In Ref. 2; BAC11273." evidence="6" ref="2">
    <original>V</original>
    <variation>A</variation>
    <location>
        <position position="576"/>
    </location>
</feature>
<feature type="strand" evidence="19">
    <location>
        <begin position="331"/>
        <end position="338"/>
    </location>
</feature>
<comment type="function">
    <text evidence="5">Required for proper alignment of chromosomes at metaphase and their accurate segregation during mitosis. Involved in the maintenance of spindle microtubules attachment to the kinetochore during sister chromatid biorientation. May recruit CENPE and CENPF to the kinetochore.</text>
</comment>
<comment type="subunit">
    <text evidence="4 5">Interacts with MAD2L2. Interacts with POGZ, CBX1, CBX3 and CBX5.</text>
</comment>
<comment type="interaction">
    <interactant intactId="EBI-2560420">
        <id>Q96JM3</id>
    </interactant>
    <interactant intactId="EBI-77889">
        <id>Q9UI95</id>
        <label>MAD2L2</label>
    </interactant>
    <organismsDiffer>false</organismsDiffer>
    <experiments>6</experiments>
</comment>
<comment type="subcellular location">
    <subcellularLocation>
        <location evidence="5">Nucleus</location>
    </subcellularLocation>
    <subcellularLocation>
        <location evidence="5">Chromosome</location>
    </subcellularLocation>
    <subcellularLocation>
        <location evidence="5">Chromosome</location>
        <location evidence="5">Centromere</location>
        <location evidence="5">Kinetochore</location>
    </subcellularLocation>
    <subcellularLocation>
        <location evidence="5">Cytoplasm</location>
        <location evidence="5">Cytoskeleton</location>
        <location evidence="5">Spindle</location>
    </subcellularLocation>
</comment>
<comment type="PTM">
    <text evidence="5">Phosphorylated by CDK1. Mitotic phosphorylation is required for the attachment of spindle microtubules to the kinetochore.</text>
</comment>
<comment type="sequence caution" evidence="6">
    <conflict type="erroneous initiation">
        <sequence resource="EMBL-CDS" id="BAB47431"/>
    </conflict>
    <text>Extended N-terminus.</text>
</comment>
<comment type="sequence caution" evidence="6">
    <conflict type="erroneous initiation">
        <sequence resource="EMBL-CDS" id="BAC11273"/>
    </conflict>
    <text>Truncated N-terminus.</text>
</comment>
<proteinExistence type="evidence at protein level"/>
<sequence length="812" mass="89099">MEAFQELRKPSARLECDHCSFRGTDYENVQIHMGTIHPEFCDEMDAGGLGKMIFYQKSAKLFHCHKCFFTSKMYSNVYYHITSKHASPDKWNDKPKNQLNKETDPVKSPPLPEHQKIPCNSAEPKSIPALSMETQKLGSVLSPESPKPTPLTPLEPQKPGSVVSPELQTPLPSPEPSKPASVSSPEPPKSVPVCESQKLAPVPSPEPQKPAPVSPESVKATLSNPKPQKQSHFPETLGPPSASSPESPVLAASPEPWGPSPAASPESRKSARTTSPEPRKPSPSESPEPWKPFPAVSPEPRRPAPAVSPGSWKPGPPGSPRPWKSNPSASSGPWKPAKPAPSVSPGPWKPIPSVSPGPWKPTPSVSSASWKSSSVSPSSWKSPPASPESWKSGPPELRKTAPTLSPEHWKAVPPVSPELRKPGPPLSPEIRSPAGSPELRKPSGSPDLWKLSPDQRKTSPASLDFPESQKSSRGGSPDLWKSSFFIEPQKPVFPETRKPGPSGPSESPKAASDIWKPVLSIDTEPRKPALFPEPAKTAPPASPEARKRALFPEPRKHALFPELPKSALFSESQKAVELGDELQIDAIDDQKCDILVQEELLASPKKLLEDTLFPSSKKLKKDNQESSDAELSSSEYIKTDLDAMDIKGQESSSDQEQVDVESIDFSKENKMDMTSPEQSRNVLQFTEEKEAFISEEEIAKYMKRGKGKYYCKICCCRAMKKGAVLHHLVNKHNVHSPYKCTICGKAFLLESLLKNHVAAHGQSLLKCPRCNFESNFPRGFKKHLTHCQSRHNEEANKKLMEALEPPLEEQQI</sequence>
<name>CHAP1_HUMAN</name>